<proteinExistence type="predicted"/>
<accession>Q57760</accession>
<keyword id="KW-1185">Reference proteome</keyword>
<dbReference type="EMBL" id="L77117">
    <property type="protein sequence ID" value="AAB98309.1"/>
    <property type="molecule type" value="Genomic_DNA"/>
</dbReference>
<dbReference type="PIR" id="A64339">
    <property type="entry name" value="A64339"/>
</dbReference>
<dbReference type="RefSeq" id="WP_010869810.1">
    <property type="nucleotide sequence ID" value="NC_000909.1"/>
</dbReference>
<dbReference type="PaxDb" id="243232-MJ_0312"/>
<dbReference type="EnsemblBacteria" id="AAB98309">
    <property type="protein sequence ID" value="AAB98309"/>
    <property type="gene ID" value="MJ_0312"/>
</dbReference>
<dbReference type="GeneID" id="1451167"/>
<dbReference type="KEGG" id="mja:MJ_0312"/>
<dbReference type="eggNOG" id="arCOG08213">
    <property type="taxonomic scope" value="Archaea"/>
</dbReference>
<dbReference type="HOGENOM" id="CLU_1444656_0_0_2"/>
<dbReference type="InParanoid" id="Q57760"/>
<dbReference type="OrthoDB" id="65245at2157"/>
<dbReference type="Proteomes" id="UP000000805">
    <property type="component" value="Chromosome"/>
</dbReference>
<sequence length="206" mass="22367">MSKGINPPKGGGTMEGRYMSQAHELLTNTGVENMANRTAERMIPLMNSLVTGYSIALAKTLGSGAGAMTQILLSEIGEVLSAMVDEILGSGQASYELENVEELLKNAFLELGIAKDVKIEKNIKDNMVIYKLYIKGSLFAPVHKILIDRGLKEFPLSPEGLLAASIVRRVLRERKDGNTKARINVNTKLPVNGETLIVEIKEVGSL</sequence>
<organism>
    <name type="scientific">Methanocaldococcus jannaschii (strain ATCC 43067 / DSM 2661 / JAL-1 / JCM 10045 / NBRC 100440)</name>
    <name type="common">Methanococcus jannaschii</name>
    <dbReference type="NCBI Taxonomy" id="243232"/>
    <lineage>
        <taxon>Archaea</taxon>
        <taxon>Methanobacteriati</taxon>
        <taxon>Methanobacteriota</taxon>
        <taxon>Methanomada group</taxon>
        <taxon>Methanococci</taxon>
        <taxon>Methanococcales</taxon>
        <taxon>Methanocaldococcaceae</taxon>
        <taxon>Methanocaldococcus</taxon>
    </lineage>
</organism>
<name>Y312_METJA</name>
<gene>
    <name type="ordered locus">MJ0312</name>
</gene>
<protein>
    <recommendedName>
        <fullName>Uncharacterized protein MJ0312</fullName>
    </recommendedName>
</protein>
<feature type="chain" id="PRO_0000106788" description="Uncharacterized protein MJ0312">
    <location>
        <begin position="1"/>
        <end position="206"/>
    </location>
</feature>
<reference key="1">
    <citation type="journal article" date="1996" name="Science">
        <title>Complete genome sequence of the methanogenic archaeon, Methanococcus jannaschii.</title>
        <authorList>
            <person name="Bult C.J."/>
            <person name="White O."/>
            <person name="Olsen G.J."/>
            <person name="Zhou L."/>
            <person name="Fleischmann R.D."/>
            <person name="Sutton G.G."/>
            <person name="Blake J.A."/>
            <person name="FitzGerald L.M."/>
            <person name="Clayton R.A."/>
            <person name="Gocayne J.D."/>
            <person name="Kerlavage A.R."/>
            <person name="Dougherty B.A."/>
            <person name="Tomb J.-F."/>
            <person name="Adams M.D."/>
            <person name="Reich C.I."/>
            <person name="Overbeek R."/>
            <person name="Kirkness E.F."/>
            <person name="Weinstock K.G."/>
            <person name="Merrick J.M."/>
            <person name="Glodek A."/>
            <person name="Scott J.L."/>
            <person name="Geoghagen N.S.M."/>
            <person name="Weidman J.F."/>
            <person name="Fuhrmann J.L."/>
            <person name="Nguyen D."/>
            <person name="Utterback T.R."/>
            <person name="Kelley J.M."/>
            <person name="Peterson J.D."/>
            <person name="Sadow P.W."/>
            <person name="Hanna M.C."/>
            <person name="Cotton M.D."/>
            <person name="Roberts K.M."/>
            <person name="Hurst M.A."/>
            <person name="Kaine B.P."/>
            <person name="Borodovsky M."/>
            <person name="Klenk H.-P."/>
            <person name="Fraser C.M."/>
            <person name="Smith H.O."/>
            <person name="Woese C.R."/>
            <person name="Venter J.C."/>
        </authorList>
    </citation>
    <scope>NUCLEOTIDE SEQUENCE [LARGE SCALE GENOMIC DNA]</scope>
    <source>
        <strain>ATCC 43067 / DSM 2661 / JAL-1 / JCM 10045 / NBRC 100440</strain>
    </source>
</reference>